<reference key="1">
    <citation type="submission" date="2004-06" db="EMBL/GenBank/DDBJ databases">
        <authorList>
            <person name="Birren B.W."/>
            <person name="Stange-Thomann N."/>
            <person name="Hafez N."/>
            <person name="DeCaprio D."/>
            <person name="Fisher S."/>
            <person name="Butler J."/>
            <person name="Elkins T."/>
            <person name="Kodira C.D."/>
            <person name="Major J."/>
            <person name="Wang S."/>
            <person name="Nicol R."/>
            <person name="Nusbaum C."/>
        </authorList>
    </citation>
    <scope>NUCLEOTIDE SEQUENCE [LARGE SCALE GENOMIC DNA]</scope>
    <source>
        <strain>ATCC 33453 / NBRC 100688 / NCTC 11704 / L1</strain>
    </source>
</reference>
<gene>
    <name evidence="1" type="primary">rimP</name>
    <name type="ordered locus">Mfl291</name>
</gene>
<dbReference type="EMBL" id="AE017263">
    <property type="protein sequence ID" value="AAT75648.1"/>
    <property type="molecule type" value="Genomic_DNA"/>
</dbReference>
<dbReference type="RefSeq" id="WP_011183188.1">
    <property type="nucleotide sequence ID" value="NC_006055.1"/>
</dbReference>
<dbReference type="RefSeq" id="YP_053532.1">
    <property type="nucleotide sequence ID" value="NC_006055.1"/>
</dbReference>
<dbReference type="SMR" id="Q6F1H5"/>
<dbReference type="STRING" id="265311.Mfl291"/>
<dbReference type="PaxDb" id="265311-Mfl291"/>
<dbReference type="EnsemblBacteria" id="AAT75648">
    <property type="protein sequence ID" value="AAT75648"/>
    <property type="gene ID" value="Mfl291"/>
</dbReference>
<dbReference type="GeneID" id="2897990"/>
<dbReference type="KEGG" id="mfl:Mfl291"/>
<dbReference type="PATRIC" id="fig|265311.5.peg.291"/>
<dbReference type="eggNOG" id="COG0779">
    <property type="taxonomic scope" value="Bacteria"/>
</dbReference>
<dbReference type="HOGENOM" id="CLU_070525_2_3_14"/>
<dbReference type="OrthoDB" id="398614at2"/>
<dbReference type="Proteomes" id="UP000006647">
    <property type="component" value="Chromosome"/>
</dbReference>
<dbReference type="GO" id="GO:0005829">
    <property type="term" value="C:cytosol"/>
    <property type="evidence" value="ECO:0007669"/>
    <property type="project" value="TreeGrafter"/>
</dbReference>
<dbReference type="GO" id="GO:0000028">
    <property type="term" value="P:ribosomal small subunit assembly"/>
    <property type="evidence" value="ECO:0007669"/>
    <property type="project" value="TreeGrafter"/>
</dbReference>
<dbReference type="GO" id="GO:0006412">
    <property type="term" value="P:translation"/>
    <property type="evidence" value="ECO:0007669"/>
    <property type="project" value="TreeGrafter"/>
</dbReference>
<dbReference type="CDD" id="cd01734">
    <property type="entry name" value="YlxS_C"/>
    <property type="match status" value="1"/>
</dbReference>
<dbReference type="Gene3D" id="2.30.30.180">
    <property type="entry name" value="Ribosome maturation factor RimP, C-terminal domain"/>
    <property type="match status" value="1"/>
</dbReference>
<dbReference type="Gene3D" id="3.30.300.70">
    <property type="entry name" value="RimP-like superfamily, N-terminal"/>
    <property type="match status" value="1"/>
</dbReference>
<dbReference type="HAMAP" id="MF_01077">
    <property type="entry name" value="RimP"/>
    <property type="match status" value="1"/>
</dbReference>
<dbReference type="InterPro" id="IPR003728">
    <property type="entry name" value="Ribosome_maturation_RimP"/>
</dbReference>
<dbReference type="InterPro" id="IPR028998">
    <property type="entry name" value="RimP_C"/>
</dbReference>
<dbReference type="InterPro" id="IPR036847">
    <property type="entry name" value="RimP_C_sf"/>
</dbReference>
<dbReference type="InterPro" id="IPR028989">
    <property type="entry name" value="RimP_N"/>
</dbReference>
<dbReference type="InterPro" id="IPR035956">
    <property type="entry name" value="RimP_N_sf"/>
</dbReference>
<dbReference type="NCBIfam" id="NF011236">
    <property type="entry name" value="PRK14643.1"/>
    <property type="match status" value="1"/>
</dbReference>
<dbReference type="PANTHER" id="PTHR33867">
    <property type="entry name" value="RIBOSOME MATURATION FACTOR RIMP"/>
    <property type="match status" value="1"/>
</dbReference>
<dbReference type="PANTHER" id="PTHR33867:SF1">
    <property type="entry name" value="RIBOSOME MATURATION FACTOR RIMP"/>
    <property type="match status" value="1"/>
</dbReference>
<dbReference type="Pfam" id="PF02576">
    <property type="entry name" value="RimP_N"/>
    <property type="match status" value="1"/>
</dbReference>
<dbReference type="SUPFAM" id="SSF74942">
    <property type="entry name" value="YhbC-like, C-terminal domain"/>
    <property type="match status" value="1"/>
</dbReference>
<dbReference type="SUPFAM" id="SSF75420">
    <property type="entry name" value="YhbC-like, N-terminal domain"/>
    <property type="match status" value="1"/>
</dbReference>
<proteinExistence type="inferred from homology"/>
<protein>
    <recommendedName>
        <fullName evidence="1">Ribosome maturation factor RimP</fullName>
    </recommendedName>
</protein>
<name>RIMP_MESFL</name>
<comment type="function">
    <text evidence="1">Required for maturation of 30S ribosomal subunits.</text>
</comment>
<comment type="subcellular location">
    <subcellularLocation>
        <location evidence="1">Cytoplasm</location>
    </subcellularLocation>
</comment>
<comment type="similarity">
    <text evidence="1">Belongs to the RimP family.</text>
</comment>
<sequence>MKNFASIKDEIQKIAESILKEYNLQIYEINNFFDFESDVLQILVEDITEPNKALDFDSIISSNEKLSDALENFPGLSEPYMLEVASAGIEKPIRSKDELVKAVNSYIHVELNQEKNTSSEIEGILLDFDVNKDTFRITYFLKGQKKKVDFKYEQVKFARYAVKF</sequence>
<accession>Q6F1H5</accession>
<feature type="chain" id="PRO_0000229250" description="Ribosome maturation factor RimP">
    <location>
        <begin position="1"/>
        <end position="164"/>
    </location>
</feature>
<keyword id="KW-0963">Cytoplasm</keyword>
<keyword id="KW-1185">Reference proteome</keyword>
<keyword id="KW-0690">Ribosome biogenesis</keyword>
<organism>
    <name type="scientific">Mesoplasma florum (strain ATCC 33453 / NBRC 100688 / NCTC 11704 / L1)</name>
    <name type="common">Acholeplasma florum</name>
    <dbReference type="NCBI Taxonomy" id="265311"/>
    <lineage>
        <taxon>Bacteria</taxon>
        <taxon>Bacillati</taxon>
        <taxon>Mycoplasmatota</taxon>
        <taxon>Mollicutes</taxon>
        <taxon>Entomoplasmatales</taxon>
        <taxon>Entomoplasmataceae</taxon>
        <taxon>Mesoplasma</taxon>
    </lineage>
</organism>
<evidence type="ECO:0000255" key="1">
    <source>
        <dbReference type="HAMAP-Rule" id="MF_01077"/>
    </source>
</evidence>